<organism>
    <name type="scientific">Pseudomonas fluorescens (strain ATCC BAA-477 / NRRL B-23932 / Pf-5)</name>
    <dbReference type="NCBI Taxonomy" id="220664"/>
    <lineage>
        <taxon>Bacteria</taxon>
        <taxon>Pseudomonadati</taxon>
        <taxon>Pseudomonadota</taxon>
        <taxon>Gammaproteobacteria</taxon>
        <taxon>Pseudomonadales</taxon>
        <taxon>Pseudomonadaceae</taxon>
        <taxon>Pseudomonas</taxon>
    </lineage>
</organism>
<gene>
    <name type="ordered locus">PFL_3960</name>
</gene>
<keyword id="KW-0963">Cytoplasm</keyword>
<keyword id="KW-0238">DNA-binding</keyword>
<keyword id="KW-0804">Transcription</keyword>
<keyword id="KW-0805">Transcription regulation</keyword>
<name>Y3960_PSEF5</name>
<sequence length="234" mass="25123">MGAQWKVKHKEAAANAKGKIFGKLVKEITIAARNGADTATNAHLRLVVEQAKKASMPRETLERAIKKGSGQLGETVQYHRVTYEGFAPHQVPLIVECVTDNINRTVAEIRVAFRKGQLGASGSVSWDFNHVGMIEASPDSPDADPELAAIEAGAQDFEPGEEGATLFLTEPADLDAVQKALPEQGFTVLSAKLGYQPKNPVSGLSDEQMAEVEAFLEGLDNHDDVQDMFVGLAG</sequence>
<evidence type="ECO:0000255" key="1">
    <source>
        <dbReference type="HAMAP-Rule" id="MF_00693"/>
    </source>
</evidence>
<reference key="1">
    <citation type="journal article" date="2005" name="Nat. Biotechnol.">
        <title>Complete genome sequence of the plant commensal Pseudomonas fluorescens Pf-5.</title>
        <authorList>
            <person name="Paulsen I.T."/>
            <person name="Press C.M."/>
            <person name="Ravel J."/>
            <person name="Kobayashi D.Y."/>
            <person name="Myers G.S.A."/>
            <person name="Mavrodi D.V."/>
            <person name="DeBoy R.T."/>
            <person name="Seshadri R."/>
            <person name="Ren Q."/>
            <person name="Madupu R."/>
            <person name="Dodson R.J."/>
            <person name="Durkin A.S."/>
            <person name="Brinkac L.M."/>
            <person name="Daugherty S.C."/>
            <person name="Sullivan S.A."/>
            <person name="Rosovitz M.J."/>
            <person name="Gwinn M.L."/>
            <person name="Zhou L."/>
            <person name="Schneider D.J."/>
            <person name="Cartinhour S.W."/>
            <person name="Nelson W.C."/>
            <person name="Weidman J."/>
            <person name="Watkins K."/>
            <person name="Tran K."/>
            <person name="Khouri H."/>
            <person name="Pierson E.A."/>
            <person name="Pierson L.S. III"/>
            <person name="Thomashow L.S."/>
            <person name="Loper J.E."/>
        </authorList>
    </citation>
    <scope>NUCLEOTIDE SEQUENCE [LARGE SCALE GENOMIC DNA]</scope>
    <source>
        <strain>ATCC BAA-477 / NRRL B-23932 / Pf-5</strain>
    </source>
</reference>
<feature type="chain" id="PRO_0000257100" description="Probable transcriptional regulatory protein PFL_3960">
    <location>
        <begin position="1"/>
        <end position="234"/>
    </location>
</feature>
<dbReference type="EMBL" id="CP000076">
    <property type="protein sequence ID" value="AAY93224.1"/>
    <property type="molecule type" value="Genomic_DNA"/>
</dbReference>
<dbReference type="RefSeq" id="WP_011062247.1">
    <property type="nucleotide sequence ID" value="NC_004129.6"/>
</dbReference>
<dbReference type="SMR" id="Q4K9M3"/>
<dbReference type="STRING" id="220664.PFL_3960"/>
<dbReference type="KEGG" id="pfl:PFL_3960"/>
<dbReference type="PATRIC" id="fig|220664.5.peg.4057"/>
<dbReference type="eggNOG" id="COG0217">
    <property type="taxonomic scope" value="Bacteria"/>
</dbReference>
<dbReference type="HOGENOM" id="CLU_062974_2_2_6"/>
<dbReference type="Proteomes" id="UP000008540">
    <property type="component" value="Chromosome"/>
</dbReference>
<dbReference type="GO" id="GO:0005737">
    <property type="term" value="C:cytoplasm"/>
    <property type="evidence" value="ECO:0007669"/>
    <property type="project" value="UniProtKB-SubCell"/>
</dbReference>
<dbReference type="GO" id="GO:0003677">
    <property type="term" value="F:DNA binding"/>
    <property type="evidence" value="ECO:0007669"/>
    <property type="project" value="UniProtKB-UniRule"/>
</dbReference>
<dbReference type="GO" id="GO:0006355">
    <property type="term" value="P:regulation of DNA-templated transcription"/>
    <property type="evidence" value="ECO:0007669"/>
    <property type="project" value="UniProtKB-UniRule"/>
</dbReference>
<dbReference type="Gene3D" id="1.10.10.200">
    <property type="match status" value="1"/>
</dbReference>
<dbReference type="Gene3D" id="3.30.70.980">
    <property type="match status" value="2"/>
</dbReference>
<dbReference type="HAMAP" id="MF_00693">
    <property type="entry name" value="Transcrip_reg_TACO1"/>
    <property type="match status" value="1"/>
</dbReference>
<dbReference type="InterPro" id="IPR017856">
    <property type="entry name" value="Integrase-like_N"/>
</dbReference>
<dbReference type="InterPro" id="IPR048300">
    <property type="entry name" value="TACO1_YebC-like_2nd/3rd_dom"/>
</dbReference>
<dbReference type="InterPro" id="IPR049083">
    <property type="entry name" value="TACO1_YebC_N"/>
</dbReference>
<dbReference type="InterPro" id="IPR002876">
    <property type="entry name" value="Transcrip_reg_TACO1-like"/>
</dbReference>
<dbReference type="InterPro" id="IPR026564">
    <property type="entry name" value="Transcrip_reg_TACO1-like_dom3"/>
</dbReference>
<dbReference type="InterPro" id="IPR029072">
    <property type="entry name" value="YebC-like"/>
</dbReference>
<dbReference type="NCBIfam" id="NF009044">
    <property type="entry name" value="PRK12378.1"/>
    <property type="match status" value="1"/>
</dbReference>
<dbReference type="PANTHER" id="PTHR12532">
    <property type="entry name" value="TRANSLATIONAL ACTIVATOR OF CYTOCHROME C OXIDASE 1"/>
    <property type="match status" value="1"/>
</dbReference>
<dbReference type="PANTHER" id="PTHR12532:SF0">
    <property type="entry name" value="TRANSLATIONAL ACTIVATOR OF CYTOCHROME C OXIDASE 1"/>
    <property type="match status" value="1"/>
</dbReference>
<dbReference type="Pfam" id="PF20772">
    <property type="entry name" value="TACO1_YebC_N"/>
    <property type="match status" value="1"/>
</dbReference>
<dbReference type="Pfam" id="PF01709">
    <property type="entry name" value="Transcrip_reg"/>
    <property type="match status" value="1"/>
</dbReference>
<dbReference type="SUPFAM" id="SSF75625">
    <property type="entry name" value="YebC-like"/>
    <property type="match status" value="1"/>
</dbReference>
<accession>Q4K9M3</accession>
<proteinExistence type="inferred from homology"/>
<protein>
    <recommendedName>
        <fullName evidence="1">Probable transcriptional regulatory protein PFL_3960</fullName>
    </recommendedName>
</protein>
<comment type="subcellular location">
    <subcellularLocation>
        <location evidence="1">Cytoplasm</location>
    </subcellularLocation>
</comment>
<comment type="similarity">
    <text evidence="1">Belongs to the TACO1 family.</text>
</comment>